<comment type="function">
    <text evidence="1">Probable RNA-binding protein, which may be required during spermatogenesis. May act by binding to the 3'-UTR of mRNAs and regulating their translation (By similarity).</text>
</comment>
<comment type="subunit">
    <text evidence="5">Interacts with DAZ1 and DAZL.</text>
</comment>
<comment type="interaction">
    <interactant intactId="EBI-998198">
        <id>Q8N9W6</id>
    </interactant>
    <interactant intactId="EBI-998198">
        <id>Q8N9W6</id>
        <label>BOLL</label>
    </interactant>
    <organismsDiffer>false</organismsDiffer>
    <experiments>2</experiments>
</comment>
<comment type="interaction">
    <interactant intactId="EBI-998198">
        <id>Q8N9W6</id>
    </interactant>
    <interactant intactId="EBI-946029">
        <id>Q6P1W5</id>
        <label>C1orf94</label>
    </interactant>
    <organismsDiffer>false</organismsDiffer>
    <experiments>3</experiments>
</comment>
<comment type="interaction">
    <interactant intactId="EBI-998198">
        <id>Q8N9W6</id>
    </interactant>
    <interactant intactId="EBI-535849">
        <id>Q8WVV9</id>
        <label>HNRNPLL</label>
    </interactant>
    <organismsDiffer>false</organismsDiffer>
    <experiments>4</experiments>
</comment>
<comment type="interaction">
    <interactant intactId="EBI-998198">
        <id>Q8N9W6</id>
    </interactant>
    <interactant intactId="EBI-10210114">
        <id>P48146</id>
        <label>NPBWR2</label>
    </interactant>
    <organismsDiffer>false</organismsDiffer>
    <experiments>3</experiments>
</comment>
<comment type="interaction">
    <interactant intactId="EBI-998198">
        <id>Q8N9W6</id>
    </interactant>
    <interactant intactId="EBI-311190">
        <id>Q8TB72</id>
        <label>PUM2</label>
    </interactant>
    <organismsDiffer>false</organismsDiffer>
    <experiments>3</experiments>
</comment>
<comment type="interaction">
    <interactant intactId="EBI-998198">
        <id>Q8N9W6</id>
    </interactant>
    <interactant intactId="EBI-746056">
        <id>O43251</id>
        <label>RBFOX2</label>
    </interactant>
    <organismsDiffer>false</organismsDiffer>
    <experiments>4</experiments>
</comment>
<comment type="interaction">
    <interactant intactId="EBI-998198">
        <id>Q8N9W6</id>
    </interactant>
    <interactant intactId="EBI-740322">
        <id>Q93062</id>
        <label>RBPMS</label>
    </interactant>
    <organismsDiffer>false</organismsDiffer>
    <experiments>3</experiments>
</comment>
<comment type="interaction">
    <interactant intactId="EBI-998198">
        <id>Q8N9W6</id>
    </interactant>
    <interactant intactId="EBI-357061">
        <id>Q92734</id>
        <label>TFG</label>
    </interactant>
    <organismsDiffer>false</organismsDiffer>
    <experiments>4</experiments>
</comment>
<comment type="interaction">
    <interactant intactId="EBI-998198">
        <id>Q8N9W6</id>
    </interactant>
    <interactant intactId="EBI-8651919">
        <id>Q66K41</id>
        <label>ZNF385C</label>
    </interactant>
    <organismsDiffer>false</organismsDiffer>
    <experiments>4</experiments>
</comment>
<comment type="interaction">
    <interactant intactId="EBI-11983447">
        <id>Q8N9W6-4</id>
    </interactant>
    <interactant intactId="EBI-17740588">
        <id>O00468-6</id>
        <label>AGRN</label>
    </interactant>
    <organismsDiffer>false</organismsDiffer>
    <experiments>3</experiments>
</comment>
<comment type="interaction">
    <interactant intactId="EBI-11983447">
        <id>Q8N9W6-4</id>
    </interactant>
    <interactant intactId="EBI-1057448">
        <id>Q5VV41</id>
        <label>ARHGEF16</label>
    </interactant>
    <organismsDiffer>false</organismsDiffer>
    <experiments>3</experiments>
</comment>
<comment type="interaction">
    <interactant intactId="EBI-11983447">
        <id>Q8N9W6-4</id>
    </interactant>
    <interactant intactId="EBI-948603">
        <id>Q03989</id>
        <label>ARID5A</label>
    </interactant>
    <organismsDiffer>false</organismsDiffer>
    <experiments>3</experiments>
</comment>
<comment type="interaction">
    <interactant intactId="EBI-11983447">
        <id>Q8N9W6-4</id>
    </interactant>
    <interactant intactId="EBI-12053753">
        <id>Q8WWM7-9</id>
        <label>ATXN2L</label>
    </interactant>
    <organismsDiffer>false</organismsDiffer>
    <experiments>3</experiments>
</comment>
<comment type="interaction">
    <interactant intactId="EBI-11983447">
        <id>Q8N9W6-4</id>
    </interactant>
    <interactant intactId="EBI-946029">
        <id>Q6P1W5</id>
        <label>C1orf94</label>
    </interactant>
    <organismsDiffer>false</organismsDiffer>
    <experiments>3</experiments>
</comment>
<comment type="interaction">
    <interactant intactId="EBI-11983447">
        <id>Q8N9W6-4</id>
    </interactant>
    <interactant intactId="EBI-11974585">
        <id>Q14781-2</id>
        <label>CBX2</label>
    </interactant>
    <organismsDiffer>false</organismsDiffer>
    <experiments>3</experiments>
</comment>
<comment type="interaction">
    <interactant intactId="EBI-11983447">
        <id>Q8N9W6-4</id>
    </interactant>
    <interactant intactId="EBI-10275670">
        <id>Q8TF63</id>
        <label>DCANP1</label>
    </interactant>
    <organismsDiffer>false</organismsDiffer>
    <experiments>3</experiments>
</comment>
<comment type="interaction">
    <interactant intactId="EBI-11983447">
        <id>Q8N9W6-4</id>
    </interactant>
    <interactant intactId="EBI-2339219">
        <id>Q08426</id>
        <label>EHHADH</label>
    </interactant>
    <organismsDiffer>false</organismsDiffer>
    <experiments>3</experiments>
</comment>
<comment type="interaction">
    <interactant intactId="EBI-11983447">
        <id>Q8N9W6-4</id>
    </interactant>
    <interactant intactId="EBI-11978259">
        <id>Q92567-2</id>
        <label>FAM168A</label>
    </interactant>
    <organismsDiffer>false</organismsDiffer>
    <experiments>3</experiments>
</comment>
<comment type="interaction">
    <interactant intactId="EBI-11983447">
        <id>Q8N9W6-4</id>
    </interactant>
    <interactant intactId="EBI-11320806">
        <id>Q9NU39</id>
        <label>FOXD4L1</label>
    </interactant>
    <organismsDiffer>false</organismsDiffer>
    <experiments>3</experiments>
</comment>
<comment type="interaction">
    <interactant intactId="EBI-11983447">
        <id>Q8N9W6-4</id>
    </interactant>
    <interactant intactId="EBI-3913399">
        <id>O43820</id>
        <label>HYAL3</label>
    </interactant>
    <organismsDiffer>false</organismsDiffer>
    <experiments>3</experiments>
</comment>
<comment type="interaction">
    <interactant intactId="EBI-11983447">
        <id>Q8N9W6-4</id>
    </interactant>
    <interactant intactId="EBI-715611">
        <id>Q9C086</id>
        <label>INO80B</label>
    </interactant>
    <organismsDiffer>false</organismsDiffer>
    <experiments>3</experiments>
</comment>
<comment type="interaction">
    <interactant intactId="EBI-11983447">
        <id>Q8N9W6-4</id>
    </interactant>
    <interactant intactId="EBI-12020132">
        <id>Q7Z4W3</id>
        <label>KRTAP19-3</label>
    </interactant>
    <organismsDiffer>false</organismsDiffer>
    <experiments>3</experiments>
</comment>
<comment type="interaction">
    <interactant intactId="EBI-11983447">
        <id>Q8N9W6-4</id>
    </interactant>
    <interactant intactId="EBI-9088686">
        <id>Q14847-2</id>
        <label>LASP1</label>
    </interactant>
    <organismsDiffer>false</organismsDiffer>
    <experiments>3</experiments>
</comment>
<comment type="interaction">
    <interactant intactId="EBI-11983447">
        <id>Q8N9W6-4</id>
    </interactant>
    <interactant intactId="EBI-2555085">
        <id>Q8IVT2</id>
        <label>MISP</label>
    </interactant>
    <organismsDiffer>false</organismsDiffer>
    <experiments>3</experiments>
</comment>
<comment type="interaction">
    <interactant intactId="EBI-11983447">
        <id>Q8N9W6-4</id>
    </interactant>
    <interactant intactId="EBI-2515597">
        <id>Q96HR8</id>
        <label>NAF1</label>
    </interactant>
    <organismsDiffer>false</organismsDiffer>
    <experiments>3</experiments>
</comment>
<comment type="interaction">
    <interactant intactId="EBI-11983447">
        <id>Q8N9W6-4</id>
    </interactant>
    <interactant intactId="EBI-11022007">
        <id>Q9HBE1-4</id>
        <label>PATZ1</label>
    </interactant>
    <organismsDiffer>false</organismsDiffer>
    <experiments>3</experiments>
</comment>
<comment type="interaction">
    <interactant intactId="EBI-11983447">
        <id>Q8N9W6-4</id>
    </interactant>
    <interactant intactId="EBI-530034">
        <id>O43189</id>
        <label>PHF1</label>
    </interactant>
    <organismsDiffer>false</organismsDiffer>
    <experiments>3</experiments>
</comment>
<comment type="interaction">
    <interactant intactId="EBI-11983447">
        <id>Q8N9W6-4</id>
    </interactant>
    <interactant intactId="EBI-1389308">
        <id>Q7Z3K3</id>
        <label>POGZ</label>
    </interactant>
    <organismsDiffer>false</organismsDiffer>
    <experiments>3</experiments>
</comment>
<comment type="interaction">
    <interactant intactId="EBI-11983447">
        <id>Q8N9W6-4</id>
    </interactant>
    <interactant intactId="EBI-11956563">
        <id>Q96HA1-2</id>
        <label>POM121</label>
    </interactant>
    <organismsDiffer>false</organismsDiffer>
    <experiments>3</experiments>
</comment>
<comment type="interaction">
    <interactant intactId="EBI-11983447">
        <id>Q8N9W6-4</id>
    </interactant>
    <interactant intactId="EBI-11959565">
        <id>Q9NV39</id>
        <label>PRR34</label>
    </interactant>
    <organismsDiffer>false</organismsDiffer>
    <experiments>3</experiments>
</comment>
<comment type="interaction">
    <interactant intactId="EBI-11983447">
        <id>Q8N9W6-4</id>
    </interactant>
    <interactant intactId="EBI-11963050">
        <id>O43251-10</id>
        <label>RBFOX2</label>
    </interactant>
    <organismsDiffer>false</organismsDiffer>
    <experiments>3</experiments>
</comment>
<comment type="interaction">
    <interactant intactId="EBI-11983447">
        <id>Q8N9W6-4</id>
    </interactant>
    <interactant intactId="EBI-11987469">
        <id>Q6ZRY4</id>
        <label>RBPMS2</label>
    </interactant>
    <organismsDiffer>false</organismsDiffer>
    <experiments>3</experiments>
</comment>
<comment type="interaction">
    <interactant intactId="EBI-11983447">
        <id>Q8N9W6-4</id>
    </interactant>
    <interactant intactId="EBI-372094">
        <id>Q9BQY4</id>
        <label>RHOXF2</label>
    </interactant>
    <organismsDiffer>false</organismsDiffer>
    <experiments>3</experiments>
</comment>
<comment type="interaction">
    <interactant intactId="EBI-11983447">
        <id>Q8N9W6-4</id>
    </interactant>
    <interactant intactId="EBI-11017428">
        <id>Q13214-2</id>
        <label>SEMA3B</label>
    </interactant>
    <organismsDiffer>false</organismsDiffer>
    <experiments>3</experiments>
</comment>
<comment type="interaction">
    <interactant intactId="EBI-11983447">
        <id>Q8N9W6-4</id>
    </interactant>
    <interactant intactId="EBI-766589">
        <id>P09234</id>
        <label>SNRPC</label>
    </interactant>
    <organismsDiffer>false</organismsDiffer>
    <experiments>3</experiments>
</comment>
<comment type="interaction">
    <interactant intactId="EBI-11983447">
        <id>Q8N9W6-4</id>
    </interactant>
    <interactant intactId="EBI-12020542">
        <id>Q96LM5</id>
        <label>SPMIP2</label>
    </interactant>
    <organismsDiffer>false</organismsDiffer>
    <experiments>3</experiments>
</comment>
<comment type="interaction">
    <interactant intactId="EBI-11983447">
        <id>Q8N9W6-4</id>
    </interactant>
    <interactant intactId="EBI-710310">
        <id>Q15560</id>
        <label>TCEA2</label>
    </interactant>
    <organismsDiffer>false</organismsDiffer>
    <experiments>3</experiments>
</comment>
<comment type="interaction">
    <interactant intactId="EBI-11983447">
        <id>Q8N9W6-4</id>
    </interactant>
    <interactant intactId="EBI-357061">
        <id>Q92734</id>
        <label>TFG</label>
    </interactant>
    <organismsDiffer>false</organismsDiffer>
    <experiments>3</experiments>
</comment>
<comment type="interaction">
    <interactant intactId="EBI-11983447">
        <id>Q8N9W6-4</id>
    </interactant>
    <interactant intactId="EBI-10188476">
        <id>A0A0C4DGF1</id>
        <label>ZBTB32</label>
    </interactant>
    <organismsDiffer>false</organismsDiffer>
    <experiments>3</experiments>
</comment>
<comment type="interaction">
    <interactant intactId="EBI-11983447">
        <id>Q8N9W6-4</id>
    </interactant>
    <interactant intactId="EBI-742550">
        <id>Q96K80</id>
        <label>ZC3H10</label>
    </interactant>
    <organismsDiffer>false</organismsDiffer>
    <experiments>3</experiments>
</comment>
<comment type="interaction">
    <interactant intactId="EBI-11983447">
        <id>Q8N9W6-4</id>
    </interactant>
    <interactant intactId="EBI-12055653">
        <id>Q66K41-2</id>
        <label>ZNF385C</label>
    </interactant>
    <organismsDiffer>false</organismsDiffer>
    <experiments>3</experiments>
</comment>
<comment type="subcellular location">
    <subcellularLocation>
        <location evidence="5 6 7">Cytoplasm</location>
    </subcellularLocation>
</comment>
<comment type="alternative products">
    <event type="alternative splicing"/>
    <isoform>
        <id>Q8N9W6-1</id>
        <name>1</name>
        <name>BOULE2</name>
        <sequence type="displayed"/>
    </isoform>
    <isoform>
        <id>Q8N9W6-2</id>
        <name>2</name>
        <sequence type="described" ref="VSP_009444 VSP_009445 VSP_009446"/>
    </isoform>
    <isoform>
        <id>Q8N9W6-3</id>
        <name>3</name>
        <name>BOULE1</name>
        <sequence type="described" ref="VSP_036805"/>
    </isoform>
    <isoform>
        <id>Q8N9W6-4</id>
        <name>4</name>
        <name>BOULE3</name>
        <sequence type="described" ref="VSP_009444"/>
    </isoform>
    <isoform>
        <id>Q8N9W6-5</id>
        <name>5</name>
        <sequence type="described" ref="VSP_055382 VSP_055383"/>
    </isoform>
</comment>
<comment type="tissue specificity">
    <text evidence="5 6">Testis specific. Not expressed in early embryos, primordial germ cells and spermatogonial cells. First expressed in the cytoplasm of spermatocytes and then persists through meiosis.</text>
</comment>
<comment type="similarity">
    <text evidence="3">Belongs to the RRM DAZ family.</text>
</comment>
<organism>
    <name type="scientific">Homo sapiens</name>
    <name type="common">Human</name>
    <dbReference type="NCBI Taxonomy" id="9606"/>
    <lineage>
        <taxon>Eukaryota</taxon>
        <taxon>Metazoa</taxon>
        <taxon>Chordata</taxon>
        <taxon>Craniata</taxon>
        <taxon>Vertebrata</taxon>
        <taxon>Euteleostomi</taxon>
        <taxon>Mammalia</taxon>
        <taxon>Eutheria</taxon>
        <taxon>Euarchontoglires</taxon>
        <taxon>Primates</taxon>
        <taxon>Haplorrhini</taxon>
        <taxon>Catarrhini</taxon>
        <taxon>Hominidae</taxon>
        <taxon>Homo</taxon>
    </lineage>
</organism>
<feature type="chain" id="PRO_0000081494" description="Protein boule-like">
    <location>
        <begin position="1"/>
        <end position="283"/>
    </location>
</feature>
<feature type="domain" description="RRM" evidence="2">
    <location>
        <begin position="33"/>
        <end position="110"/>
    </location>
</feature>
<feature type="domain" description="DAZ" evidence="3">
    <location>
        <begin position="160"/>
        <end position="184"/>
    </location>
</feature>
<feature type="region of interest" description="Disordered" evidence="4">
    <location>
        <begin position="1"/>
        <end position="25"/>
    </location>
</feature>
<feature type="splice variant" id="VSP_055382" description="In isoform 5." evidence="8">
    <original>MQTDSLSPS</original>
    <variation>MTELEYPKG</variation>
    <location>
        <begin position="1"/>
        <end position="9"/>
    </location>
</feature>
<feature type="splice variant" id="VSP_009444" description="In isoform 2 and isoform 4." evidence="8 9">
    <original>M</original>
    <variation>MQTSNQM</variation>
    <location>
        <position position="1"/>
    </location>
</feature>
<feature type="splice variant" id="VSP_036805" description="In isoform 3." evidence="8 9">
    <original>M</original>
    <variation>METESGPQTSNQM</variation>
    <location>
        <position position="1"/>
    </location>
</feature>
<feature type="splice variant" id="VSP_055383" description="In isoform 5." evidence="8">
    <location>
        <begin position="10"/>
        <end position="118"/>
    </location>
</feature>
<feature type="splice variant" id="VSP_009445" description="In isoform 2." evidence="8">
    <original>Q</original>
    <variation>QGIKQCHTRRWMDSLLPFTKCDE</variation>
    <location>
        <position position="184"/>
    </location>
</feature>
<feature type="splice variant" id="VSP_009446" description="In isoform 2." evidence="8">
    <original>TVWSIHY</original>
    <variation>CGAFIIKTIGQLYSSSTDFLSNDPCVAEIQLQRTS</variation>
    <location>
        <begin position="277"/>
        <end position="283"/>
    </location>
</feature>
<feature type="sequence conflict" description="In Ref. 3; BAC04171." evidence="10" ref="3">
    <original>V</original>
    <variation>A</variation>
    <location>
        <position position="164"/>
    </location>
</feature>
<accession>Q8N9W6</accession>
<accession>B4DZA4</accession>
<accession>Q0JW32</accession>
<accession>Q53T62</accession>
<accession>Q969U3</accession>
<protein>
    <recommendedName>
        <fullName>Protein boule-like</fullName>
    </recommendedName>
</protein>
<name>BOLL_HUMAN</name>
<dbReference type="EMBL" id="AF272858">
    <property type="protein sequence ID" value="AAK58689.1"/>
    <property type="molecule type" value="mRNA"/>
</dbReference>
<dbReference type="EMBL" id="AM295005">
    <property type="protein sequence ID" value="CAL25726.1"/>
    <property type="molecule type" value="mRNA"/>
</dbReference>
<dbReference type="EMBL" id="AK058099">
    <property type="protein sequence ID" value="BAB71664.1"/>
    <property type="molecule type" value="mRNA"/>
</dbReference>
<dbReference type="EMBL" id="AK093453">
    <property type="protein sequence ID" value="BAC04171.1"/>
    <property type="molecule type" value="mRNA"/>
</dbReference>
<dbReference type="EMBL" id="AK097795">
    <property type="status" value="NOT_ANNOTATED_CDS"/>
    <property type="molecule type" value="mRNA"/>
</dbReference>
<dbReference type="EMBL" id="AK302817">
    <property type="protein sequence ID" value="BAG64016.1"/>
    <property type="molecule type" value="mRNA"/>
</dbReference>
<dbReference type="EMBL" id="AC011997">
    <property type="protein sequence ID" value="AAX93045.1"/>
    <property type="molecule type" value="Genomic_DNA"/>
</dbReference>
<dbReference type="EMBL" id="CH471063">
    <property type="protein sequence ID" value="EAW70172.1"/>
    <property type="molecule type" value="Genomic_DNA"/>
</dbReference>
<dbReference type="EMBL" id="BC033674">
    <property type="protein sequence ID" value="AAH33674.1"/>
    <property type="molecule type" value="mRNA"/>
</dbReference>
<dbReference type="CCDS" id="CCDS2324.1">
    <molecule id="Q8N9W6-3"/>
</dbReference>
<dbReference type="CCDS" id="CCDS2325.1">
    <molecule id="Q8N9W6-1"/>
</dbReference>
<dbReference type="CCDS" id="CCDS63081.1">
    <molecule id="Q8N9W6-5"/>
</dbReference>
<dbReference type="RefSeq" id="NP_001271287.1">
    <molecule id="Q8N9W6-5"/>
    <property type="nucleotide sequence ID" value="NM_001284358.2"/>
</dbReference>
<dbReference type="RefSeq" id="NP_001271290.1">
    <molecule id="Q8N9W6-2"/>
    <property type="nucleotide sequence ID" value="NM_001284361.2"/>
</dbReference>
<dbReference type="RefSeq" id="NP_001271291.1">
    <molecule id="Q8N9W6-4"/>
    <property type="nucleotide sequence ID" value="NM_001284362.2"/>
</dbReference>
<dbReference type="RefSeq" id="NP_149019.1">
    <molecule id="Q8N9W6-1"/>
    <property type="nucleotide sequence ID" value="NM_033030.6"/>
</dbReference>
<dbReference type="RefSeq" id="NP_932074.1">
    <molecule id="Q8N9W6-3"/>
    <property type="nucleotide sequence ID" value="NM_197970.3"/>
</dbReference>
<dbReference type="SMR" id="Q8N9W6"/>
<dbReference type="BioGRID" id="122456">
    <property type="interactions" value="42"/>
</dbReference>
<dbReference type="FunCoup" id="Q8N9W6">
    <property type="interactions" value="823"/>
</dbReference>
<dbReference type="IntAct" id="Q8N9W6">
    <property type="interactions" value="44"/>
</dbReference>
<dbReference type="STRING" id="9606.ENSP00000314792"/>
<dbReference type="iPTMnet" id="Q8N9W6"/>
<dbReference type="PhosphoSitePlus" id="Q8N9W6"/>
<dbReference type="BioMuta" id="BOLL"/>
<dbReference type="DMDM" id="44887719"/>
<dbReference type="MassIVE" id="Q8N9W6"/>
<dbReference type="PaxDb" id="9606-ENSP00000314792"/>
<dbReference type="PeptideAtlas" id="Q8N9W6"/>
<dbReference type="ProteomicsDB" id="72599">
    <molecule id="Q8N9W6-1"/>
</dbReference>
<dbReference type="ProteomicsDB" id="72600">
    <molecule id="Q8N9W6-2"/>
</dbReference>
<dbReference type="ProteomicsDB" id="72601">
    <molecule id="Q8N9W6-3"/>
</dbReference>
<dbReference type="ProteomicsDB" id="72602">
    <molecule id="Q8N9W6-4"/>
</dbReference>
<dbReference type="Antibodypedia" id="19911">
    <property type="antibodies" value="493 antibodies from 29 providers"/>
</dbReference>
<dbReference type="DNASU" id="66037"/>
<dbReference type="Ensembl" id="ENST00000282278.12">
    <molecule id="Q8N9W6-5"/>
    <property type="protein sequence ID" value="ENSP00000282278.8"/>
    <property type="gene ID" value="ENSG00000152430.19"/>
</dbReference>
<dbReference type="Ensembl" id="ENST00000321801.11">
    <molecule id="Q8N9W6-3"/>
    <property type="protein sequence ID" value="ENSP00000314792.7"/>
    <property type="gene ID" value="ENSG00000152430.19"/>
</dbReference>
<dbReference type="Ensembl" id="ENST00000392296.9">
    <molecule id="Q8N9W6-1"/>
    <property type="protein sequence ID" value="ENSP00000376116.4"/>
    <property type="gene ID" value="ENSG00000152430.19"/>
</dbReference>
<dbReference type="Ensembl" id="ENST00000433157.1">
    <molecule id="Q8N9W6-1"/>
    <property type="protein sequence ID" value="ENSP00000396099.1"/>
    <property type="gene ID" value="ENSG00000152430.19"/>
</dbReference>
<dbReference type="GeneID" id="66037"/>
<dbReference type="KEGG" id="hsa:66037"/>
<dbReference type="MANE-Select" id="ENST00000392296.9">
    <property type="protein sequence ID" value="ENSP00000376116.4"/>
    <property type="RefSeq nucleotide sequence ID" value="NM_033030.6"/>
    <property type="RefSeq protein sequence ID" value="NP_149019.1"/>
</dbReference>
<dbReference type="UCSC" id="uc002uus.2">
    <molecule id="Q8N9W6-1"/>
    <property type="organism name" value="human"/>
</dbReference>
<dbReference type="AGR" id="HGNC:14273"/>
<dbReference type="CTD" id="66037"/>
<dbReference type="DisGeNET" id="66037"/>
<dbReference type="GeneCards" id="BOLL"/>
<dbReference type="HGNC" id="HGNC:14273">
    <property type="gene designation" value="BOLL"/>
</dbReference>
<dbReference type="HPA" id="ENSG00000152430">
    <property type="expression patterns" value="Tissue enriched (testis)"/>
</dbReference>
<dbReference type="MIM" id="606165">
    <property type="type" value="gene"/>
</dbReference>
<dbReference type="neXtProt" id="NX_Q8N9W6"/>
<dbReference type="OpenTargets" id="ENSG00000152430"/>
<dbReference type="PharmGKB" id="PA25397"/>
<dbReference type="VEuPathDB" id="HostDB:ENSG00000152430"/>
<dbReference type="eggNOG" id="KOG0118">
    <property type="taxonomic scope" value="Eukaryota"/>
</dbReference>
<dbReference type="GeneTree" id="ENSGT00530000063480"/>
<dbReference type="HOGENOM" id="CLU_077156_1_0_1"/>
<dbReference type="InParanoid" id="Q8N9W6"/>
<dbReference type="OMA" id="MSCGTFY"/>
<dbReference type="OrthoDB" id="762982at2759"/>
<dbReference type="PAN-GO" id="Q8N9W6">
    <property type="GO annotations" value="5 GO annotations based on evolutionary models"/>
</dbReference>
<dbReference type="PhylomeDB" id="Q8N9W6"/>
<dbReference type="TreeFam" id="TF324396"/>
<dbReference type="PathwayCommons" id="Q8N9W6"/>
<dbReference type="SignaLink" id="Q8N9W6"/>
<dbReference type="BioGRID-ORCS" id="66037">
    <property type="hits" value="16 hits in 1146 CRISPR screens"/>
</dbReference>
<dbReference type="ChiTaRS" id="BOLL">
    <property type="organism name" value="human"/>
</dbReference>
<dbReference type="GeneWiki" id="BOLL"/>
<dbReference type="GenomeRNAi" id="66037"/>
<dbReference type="Pharos" id="Q8N9W6">
    <property type="development level" value="Tbio"/>
</dbReference>
<dbReference type="PRO" id="PR:Q8N9W6"/>
<dbReference type="Proteomes" id="UP000005640">
    <property type="component" value="Chromosome 2"/>
</dbReference>
<dbReference type="RNAct" id="Q8N9W6">
    <property type="molecule type" value="protein"/>
</dbReference>
<dbReference type="Bgee" id="ENSG00000152430">
    <property type="expression patterns" value="Expressed in left testis and 71 other cell types or tissues"/>
</dbReference>
<dbReference type="ExpressionAtlas" id="Q8N9W6">
    <property type="expression patterns" value="baseline and differential"/>
</dbReference>
<dbReference type="GO" id="GO:0005737">
    <property type="term" value="C:cytoplasm"/>
    <property type="evidence" value="ECO:0000314"/>
    <property type="project" value="UniProtKB"/>
</dbReference>
<dbReference type="GO" id="GO:0042802">
    <property type="term" value="F:identical protein binding"/>
    <property type="evidence" value="ECO:0000353"/>
    <property type="project" value="IntAct"/>
</dbReference>
<dbReference type="GO" id="GO:0003730">
    <property type="term" value="F:mRNA 3'-UTR binding"/>
    <property type="evidence" value="ECO:0000318"/>
    <property type="project" value="GO_Central"/>
</dbReference>
<dbReference type="GO" id="GO:0008494">
    <property type="term" value="F:translation activator activity"/>
    <property type="evidence" value="ECO:0000314"/>
    <property type="project" value="UniProtKB"/>
</dbReference>
<dbReference type="GO" id="GO:0070935">
    <property type="term" value="P:3'-UTR-mediated mRNA stabilization"/>
    <property type="evidence" value="ECO:0000318"/>
    <property type="project" value="GO_Central"/>
</dbReference>
<dbReference type="GO" id="GO:0030154">
    <property type="term" value="P:cell differentiation"/>
    <property type="evidence" value="ECO:0007669"/>
    <property type="project" value="UniProtKB-KW"/>
</dbReference>
<dbReference type="GO" id="GO:0051321">
    <property type="term" value="P:meiotic cell cycle"/>
    <property type="evidence" value="ECO:0000314"/>
    <property type="project" value="MGI"/>
</dbReference>
<dbReference type="GO" id="GO:0045948">
    <property type="term" value="P:positive regulation of translational initiation"/>
    <property type="evidence" value="ECO:0000314"/>
    <property type="project" value="UniProtKB"/>
</dbReference>
<dbReference type="GO" id="GO:0007283">
    <property type="term" value="P:spermatogenesis"/>
    <property type="evidence" value="ECO:0007669"/>
    <property type="project" value="UniProtKB-KW"/>
</dbReference>
<dbReference type="CDD" id="cd12673">
    <property type="entry name" value="RRM_BOULE"/>
    <property type="match status" value="1"/>
</dbReference>
<dbReference type="FunFam" id="3.30.70.330:FF:000167">
    <property type="entry name" value="protein boule-like isoform X1"/>
    <property type="match status" value="1"/>
</dbReference>
<dbReference type="Gene3D" id="3.30.70.330">
    <property type="match status" value="1"/>
</dbReference>
<dbReference type="InterPro" id="IPR043628">
    <property type="entry name" value="DAZ_dom"/>
</dbReference>
<dbReference type="InterPro" id="IPR012677">
    <property type="entry name" value="Nucleotide-bd_a/b_plait_sf"/>
</dbReference>
<dbReference type="InterPro" id="IPR035979">
    <property type="entry name" value="RBD_domain_sf"/>
</dbReference>
<dbReference type="InterPro" id="IPR000504">
    <property type="entry name" value="RRM_dom"/>
</dbReference>
<dbReference type="PANTHER" id="PTHR11176">
    <property type="entry name" value="BOULE-RELATED"/>
    <property type="match status" value="1"/>
</dbReference>
<dbReference type="PANTHER" id="PTHR11176:SF10">
    <property type="entry name" value="PROTEIN BOULE-LIKE"/>
    <property type="match status" value="1"/>
</dbReference>
<dbReference type="Pfam" id="PF00076">
    <property type="entry name" value="RRM_1"/>
    <property type="match status" value="1"/>
</dbReference>
<dbReference type="SMART" id="SM00360">
    <property type="entry name" value="RRM"/>
    <property type="match status" value="1"/>
</dbReference>
<dbReference type="SUPFAM" id="SSF54928">
    <property type="entry name" value="RNA-binding domain, RBD"/>
    <property type="match status" value="1"/>
</dbReference>
<dbReference type="PROSITE" id="PS51890">
    <property type="entry name" value="DAZ"/>
    <property type="match status" value="1"/>
</dbReference>
<dbReference type="PROSITE" id="PS50102">
    <property type="entry name" value="RRM"/>
    <property type="match status" value="1"/>
</dbReference>
<sequence>MQTDSLSPSPNPVSPVPLNNPTSAPRYGTVIPNRIFVGGIDFKTNESDLRKFFSQYGSVKEVKIVNDRAGVSKGYGFVTFETQEDAQKILQEAEKLNYKDKKLNIGPAIRKQQVGIPRSSIMPAAGTMYLTTSTGYPYTYHNGVAYFHTPEVTSVPPPWPSRSVCSSPVMVAQPIYQQPAYHYQATTQYLPGQWQWSVPQPSASSAPFLYLQPSEVIYQPVEIAQDGGCVPPPLSLMETSVPEPYSDHGVQATYHQVYAPSAITMPAPVMQPEPIKTVWSIHY</sequence>
<keyword id="KW-0025">Alternative splicing</keyword>
<keyword id="KW-0963">Cytoplasm</keyword>
<keyword id="KW-0217">Developmental protein</keyword>
<keyword id="KW-0221">Differentiation</keyword>
<keyword id="KW-1267">Proteomics identification</keyword>
<keyword id="KW-1185">Reference proteome</keyword>
<keyword id="KW-0694">RNA-binding</keyword>
<keyword id="KW-0744">Spermatogenesis</keyword>
<keyword id="KW-0810">Translation regulation</keyword>
<reference key="1">
    <citation type="journal article" date="2001" name="Proc. Natl. Acad. Sci. U.S.A.">
        <title>A gene family required for human germ cell development evolved from an ancient meiotic gene conserved in metazoans.</title>
        <authorList>
            <person name="Xu E.Y."/>
            <person name="Moore F.L."/>
            <person name="Reijo Pera R.A."/>
        </authorList>
    </citation>
    <scope>NUCLEOTIDE SEQUENCE [MRNA] (ISOFORM 1)</scope>
    <scope>SUBCELLULAR LOCATION</scope>
    <scope>TISSUE SPECIFICITY</scope>
    <scope>INTERACTION WITH DAZ1 AND DAZL</scope>
</reference>
<reference key="2">
    <citation type="journal article" date="2007" name="Mol. Hum. Reprod.">
        <title>Association of three isoforms of the meiotic BOULE gene with spermatogenic failure in infertile men.</title>
        <authorList>
            <person name="Kostova E."/>
            <person name="Yeung C.H."/>
            <person name="Luetjens C.M."/>
            <person name="Brune M."/>
            <person name="Nieschlag E."/>
            <person name="Gromoll J."/>
        </authorList>
    </citation>
    <scope>NUCLEOTIDE SEQUENCE [MRNA] (ISOFORMS 1; 3 AND 4)</scope>
    <scope>SUBCELLULAR LOCATION</scope>
    <scope>TISSUE SPECIFICITY</scope>
    <source>
        <tissue>Testis</tissue>
    </source>
</reference>
<reference key="3">
    <citation type="journal article" date="2004" name="Nat. Genet.">
        <title>Complete sequencing and characterization of 21,243 full-length human cDNAs.</title>
        <authorList>
            <person name="Ota T."/>
            <person name="Suzuki Y."/>
            <person name="Nishikawa T."/>
            <person name="Otsuki T."/>
            <person name="Sugiyama T."/>
            <person name="Irie R."/>
            <person name="Wakamatsu A."/>
            <person name="Hayashi K."/>
            <person name="Sato H."/>
            <person name="Nagai K."/>
            <person name="Kimura K."/>
            <person name="Makita H."/>
            <person name="Sekine M."/>
            <person name="Obayashi M."/>
            <person name="Nishi T."/>
            <person name="Shibahara T."/>
            <person name="Tanaka T."/>
            <person name="Ishii S."/>
            <person name="Yamamoto J."/>
            <person name="Saito K."/>
            <person name="Kawai Y."/>
            <person name="Isono Y."/>
            <person name="Nakamura Y."/>
            <person name="Nagahari K."/>
            <person name="Murakami K."/>
            <person name="Yasuda T."/>
            <person name="Iwayanagi T."/>
            <person name="Wagatsuma M."/>
            <person name="Shiratori A."/>
            <person name="Sudo H."/>
            <person name="Hosoiri T."/>
            <person name="Kaku Y."/>
            <person name="Kodaira H."/>
            <person name="Kondo H."/>
            <person name="Sugawara M."/>
            <person name="Takahashi M."/>
            <person name="Kanda K."/>
            <person name="Yokoi T."/>
            <person name="Furuya T."/>
            <person name="Kikkawa E."/>
            <person name="Omura Y."/>
            <person name="Abe K."/>
            <person name="Kamihara K."/>
            <person name="Katsuta N."/>
            <person name="Sato K."/>
            <person name="Tanikawa M."/>
            <person name="Yamazaki M."/>
            <person name="Ninomiya K."/>
            <person name="Ishibashi T."/>
            <person name="Yamashita H."/>
            <person name="Murakawa K."/>
            <person name="Fujimori K."/>
            <person name="Tanai H."/>
            <person name="Kimata M."/>
            <person name="Watanabe M."/>
            <person name="Hiraoka S."/>
            <person name="Chiba Y."/>
            <person name="Ishida S."/>
            <person name="Ono Y."/>
            <person name="Takiguchi S."/>
            <person name="Watanabe S."/>
            <person name="Yosida M."/>
            <person name="Hotuta T."/>
            <person name="Kusano J."/>
            <person name="Kanehori K."/>
            <person name="Takahashi-Fujii A."/>
            <person name="Hara H."/>
            <person name="Tanase T.-O."/>
            <person name="Nomura Y."/>
            <person name="Togiya S."/>
            <person name="Komai F."/>
            <person name="Hara R."/>
            <person name="Takeuchi K."/>
            <person name="Arita M."/>
            <person name="Imose N."/>
            <person name="Musashino K."/>
            <person name="Yuuki H."/>
            <person name="Oshima A."/>
            <person name="Sasaki N."/>
            <person name="Aotsuka S."/>
            <person name="Yoshikawa Y."/>
            <person name="Matsunawa H."/>
            <person name="Ichihara T."/>
            <person name="Shiohata N."/>
            <person name="Sano S."/>
            <person name="Moriya S."/>
            <person name="Momiyama H."/>
            <person name="Satoh N."/>
            <person name="Takami S."/>
            <person name="Terashima Y."/>
            <person name="Suzuki O."/>
            <person name="Nakagawa S."/>
            <person name="Senoh A."/>
            <person name="Mizoguchi H."/>
            <person name="Goto Y."/>
            <person name="Shimizu F."/>
            <person name="Wakebe H."/>
            <person name="Hishigaki H."/>
            <person name="Watanabe T."/>
            <person name="Sugiyama A."/>
            <person name="Takemoto M."/>
            <person name="Kawakami B."/>
            <person name="Yamazaki M."/>
            <person name="Watanabe K."/>
            <person name="Kumagai A."/>
            <person name="Itakura S."/>
            <person name="Fukuzumi Y."/>
            <person name="Fujimori Y."/>
            <person name="Komiyama M."/>
            <person name="Tashiro H."/>
            <person name="Tanigami A."/>
            <person name="Fujiwara T."/>
            <person name="Ono T."/>
            <person name="Yamada K."/>
            <person name="Fujii Y."/>
            <person name="Ozaki K."/>
            <person name="Hirao M."/>
            <person name="Ohmori Y."/>
            <person name="Kawabata A."/>
            <person name="Hikiji T."/>
            <person name="Kobatake N."/>
            <person name="Inagaki H."/>
            <person name="Ikema Y."/>
            <person name="Okamoto S."/>
            <person name="Okitani R."/>
            <person name="Kawakami T."/>
            <person name="Noguchi S."/>
            <person name="Itoh T."/>
            <person name="Shigeta K."/>
            <person name="Senba T."/>
            <person name="Matsumura K."/>
            <person name="Nakajima Y."/>
            <person name="Mizuno T."/>
            <person name="Morinaga M."/>
            <person name="Sasaki M."/>
            <person name="Togashi T."/>
            <person name="Oyama M."/>
            <person name="Hata H."/>
            <person name="Watanabe M."/>
            <person name="Komatsu T."/>
            <person name="Mizushima-Sugano J."/>
            <person name="Satoh T."/>
            <person name="Shirai Y."/>
            <person name="Takahashi Y."/>
            <person name="Nakagawa K."/>
            <person name="Okumura K."/>
            <person name="Nagase T."/>
            <person name="Nomura N."/>
            <person name="Kikuchi H."/>
            <person name="Masuho Y."/>
            <person name="Yamashita R."/>
            <person name="Nakai K."/>
            <person name="Yada T."/>
            <person name="Nakamura Y."/>
            <person name="Ohara O."/>
            <person name="Isogai T."/>
            <person name="Sugano S."/>
        </authorList>
    </citation>
    <scope>NUCLEOTIDE SEQUENCE [LARGE SCALE MRNA] (ISOFORMS 1; 2; 3 AND 5)</scope>
    <source>
        <tissue>Testis</tissue>
    </source>
</reference>
<reference key="4">
    <citation type="journal article" date="2005" name="Nature">
        <title>Generation and annotation of the DNA sequences of human chromosomes 2 and 4.</title>
        <authorList>
            <person name="Hillier L.W."/>
            <person name="Graves T.A."/>
            <person name="Fulton R.S."/>
            <person name="Fulton L.A."/>
            <person name="Pepin K.H."/>
            <person name="Minx P."/>
            <person name="Wagner-McPherson C."/>
            <person name="Layman D."/>
            <person name="Wylie K."/>
            <person name="Sekhon M."/>
            <person name="Becker M.C."/>
            <person name="Fewell G.A."/>
            <person name="Delehaunty K.D."/>
            <person name="Miner T.L."/>
            <person name="Nash W.E."/>
            <person name="Kremitzki C."/>
            <person name="Oddy L."/>
            <person name="Du H."/>
            <person name="Sun H."/>
            <person name="Bradshaw-Cordum H."/>
            <person name="Ali J."/>
            <person name="Carter J."/>
            <person name="Cordes M."/>
            <person name="Harris A."/>
            <person name="Isak A."/>
            <person name="van Brunt A."/>
            <person name="Nguyen C."/>
            <person name="Du F."/>
            <person name="Courtney L."/>
            <person name="Kalicki J."/>
            <person name="Ozersky P."/>
            <person name="Abbott S."/>
            <person name="Armstrong J."/>
            <person name="Belter E.A."/>
            <person name="Caruso L."/>
            <person name="Cedroni M."/>
            <person name="Cotton M."/>
            <person name="Davidson T."/>
            <person name="Desai A."/>
            <person name="Elliott G."/>
            <person name="Erb T."/>
            <person name="Fronick C."/>
            <person name="Gaige T."/>
            <person name="Haakenson W."/>
            <person name="Haglund K."/>
            <person name="Holmes A."/>
            <person name="Harkins R."/>
            <person name="Kim K."/>
            <person name="Kruchowski S.S."/>
            <person name="Strong C.M."/>
            <person name="Grewal N."/>
            <person name="Goyea E."/>
            <person name="Hou S."/>
            <person name="Levy A."/>
            <person name="Martinka S."/>
            <person name="Mead K."/>
            <person name="McLellan M.D."/>
            <person name="Meyer R."/>
            <person name="Randall-Maher J."/>
            <person name="Tomlinson C."/>
            <person name="Dauphin-Kohlberg S."/>
            <person name="Kozlowicz-Reilly A."/>
            <person name="Shah N."/>
            <person name="Swearengen-Shahid S."/>
            <person name="Snider J."/>
            <person name="Strong J.T."/>
            <person name="Thompson J."/>
            <person name="Yoakum M."/>
            <person name="Leonard S."/>
            <person name="Pearman C."/>
            <person name="Trani L."/>
            <person name="Radionenko M."/>
            <person name="Waligorski J.E."/>
            <person name="Wang C."/>
            <person name="Rock S.M."/>
            <person name="Tin-Wollam A.-M."/>
            <person name="Maupin R."/>
            <person name="Latreille P."/>
            <person name="Wendl M.C."/>
            <person name="Yang S.-P."/>
            <person name="Pohl C."/>
            <person name="Wallis J.W."/>
            <person name="Spieth J."/>
            <person name="Bieri T.A."/>
            <person name="Berkowicz N."/>
            <person name="Nelson J.O."/>
            <person name="Osborne J."/>
            <person name="Ding L."/>
            <person name="Meyer R."/>
            <person name="Sabo A."/>
            <person name="Shotland Y."/>
            <person name="Sinha P."/>
            <person name="Wohldmann P.E."/>
            <person name="Cook L.L."/>
            <person name="Hickenbotham M.T."/>
            <person name="Eldred J."/>
            <person name="Williams D."/>
            <person name="Jones T.A."/>
            <person name="She X."/>
            <person name="Ciccarelli F.D."/>
            <person name="Izaurralde E."/>
            <person name="Taylor J."/>
            <person name="Schmutz J."/>
            <person name="Myers R.M."/>
            <person name="Cox D.R."/>
            <person name="Huang X."/>
            <person name="McPherson J.D."/>
            <person name="Mardis E.R."/>
            <person name="Clifton S.W."/>
            <person name="Warren W.C."/>
            <person name="Chinwalla A.T."/>
            <person name="Eddy S.R."/>
            <person name="Marra M.A."/>
            <person name="Ovcharenko I."/>
            <person name="Furey T.S."/>
            <person name="Miller W."/>
            <person name="Eichler E.E."/>
            <person name="Bork P."/>
            <person name="Suyama M."/>
            <person name="Torrents D."/>
            <person name="Waterston R.H."/>
            <person name="Wilson R.K."/>
        </authorList>
    </citation>
    <scope>NUCLEOTIDE SEQUENCE [LARGE SCALE GENOMIC DNA]</scope>
</reference>
<reference key="5">
    <citation type="journal article" date="2004" name="Genome Res.">
        <title>The status, quality, and expansion of the NIH full-length cDNA project: the Mammalian Gene Collection (MGC).</title>
        <authorList>
            <consortium name="The MGC Project Team"/>
        </authorList>
    </citation>
    <scope>NUCLEOTIDE SEQUENCE [LARGE SCALE MRNA] (ISOFORM 1)</scope>
    <source>
        <tissue>Brain</tissue>
    </source>
</reference>
<reference key="6">
    <citation type="journal article" date="2019" name="J. Proteome Res.">
        <title>Cell Type-Specific Expression of Testis Elevated Genes Based on Transcriptomics and Antibody-Based Proteomics.</title>
        <authorList>
            <person name="Pineau C."/>
            <person name="Hikmet F."/>
            <person name="Zhang C."/>
            <person name="Oksvold P."/>
            <person name="Chen S."/>
            <person name="Fagerberg L."/>
            <person name="Uhlen M."/>
            <person name="Lindskog C."/>
        </authorList>
    </citation>
    <scope>SUBCELLULAR LOCATION</scope>
</reference>
<gene>
    <name type="primary">BOLL</name>
    <name type="synonym">BOULE</name>
</gene>
<proteinExistence type="evidence at protein level"/>
<evidence type="ECO:0000250" key="1"/>
<evidence type="ECO:0000255" key="2">
    <source>
        <dbReference type="PROSITE-ProRule" id="PRU00176"/>
    </source>
</evidence>
<evidence type="ECO:0000255" key="3">
    <source>
        <dbReference type="PROSITE-ProRule" id="PRU01238"/>
    </source>
</evidence>
<evidence type="ECO:0000256" key="4">
    <source>
        <dbReference type="SAM" id="MobiDB-lite"/>
    </source>
</evidence>
<evidence type="ECO:0000269" key="5">
    <source>
    </source>
</evidence>
<evidence type="ECO:0000269" key="6">
    <source>
    </source>
</evidence>
<evidence type="ECO:0000269" key="7">
    <source>
    </source>
</evidence>
<evidence type="ECO:0000303" key="8">
    <source>
    </source>
</evidence>
<evidence type="ECO:0000303" key="9">
    <source>
    </source>
</evidence>
<evidence type="ECO:0000305" key="10"/>